<evidence type="ECO:0000250" key="1">
    <source>
        <dbReference type="UniProtKB" id="Q9NVP1"/>
    </source>
</evidence>
<evidence type="ECO:0000255" key="2">
    <source>
        <dbReference type="PROSITE-ProRule" id="PRU00541"/>
    </source>
</evidence>
<evidence type="ECO:0000255" key="3">
    <source>
        <dbReference type="PROSITE-ProRule" id="PRU00542"/>
    </source>
</evidence>
<evidence type="ECO:0000256" key="4">
    <source>
        <dbReference type="SAM" id="MobiDB-lite"/>
    </source>
</evidence>
<evidence type="ECO:0000269" key="5">
    <source>
    </source>
</evidence>
<evidence type="ECO:0000305" key="6"/>
<sequence>MSQLQMKLLRRKIEKRNAKLRQRNLKLQETSDTSLSQPQNGDVPKETGKGGKVKKALKRSVPVDSAEAQSGGMPEETLENGKVKKSPQKLTTLANGEAAPTPPPDSEVKKKKKKKRKMANDAGPDTKKAKTEESAEACEEPEDDVKKADDSEVPSLPLGLTGAFEDTSFASLSNLVNENTLKAIEEMGFKRMTEIQHKSIRPLLEGRDLLAAAKTGSGKTLAFLIPVIELIVKLKFMPRNGTGVLILSPTRELAMQTFGVLKELMTHHVHTYGLIMGGSNRSAEVQKLLNGINIIVATPGRLLDHMQNTPGFMYKNLQCLVIDEADRILDVGFEEELKQIIKLLPARRQTMLFSATQTRKVEDLARISLKKEPLYVGVDDDKEVATVDGLEQGYVVCPSEKRFLLLFTFLKKNRKKKVMVFFSSCMSVKYHYELLNYIDLPVLAIHGKQKQNKRTTTFFQFCNADSGILLCTDVAARGLDIPEVDWIVQYDPPDDPKEYIHRVGRTARGLNGRGHALLILRPEELGFLRYLKQSKVPLNQFDFSWSKVSDIQSQLEKLIEKNYFLHKSAQEAYKSYIRAYDSHSLKQIFNVNNLNLPQVALSFGFKVPPFVDLNVSSHDGKLKKRGGGGGFGYQKTKKVEKSKIFKHISKKPADRRQFSH</sequence>
<organism>
    <name type="scientific">Mus musculus</name>
    <name type="common">Mouse</name>
    <dbReference type="NCBI Taxonomy" id="10090"/>
    <lineage>
        <taxon>Eukaryota</taxon>
        <taxon>Metazoa</taxon>
        <taxon>Chordata</taxon>
        <taxon>Craniata</taxon>
        <taxon>Vertebrata</taxon>
        <taxon>Euteleostomi</taxon>
        <taxon>Mammalia</taxon>
        <taxon>Eutheria</taxon>
        <taxon>Euarchontoglires</taxon>
        <taxon>Glires</taxon>
        <taxon>Rodentia</taxon>
        <taxon>Myomorpha</taxon>
        <taxon>Muroidea</taxon>
        <taxon>Muridae</taxon>
        <taxon>Murinae</taxon>
        <taxon>Mus</taxon>
        <taxon>Mus</taxon>
    </lineage>
</organism>
<feature type="chain" id="PRO_0000055002" description="ATP-dependent RNA helicase DDX18">
    <location>
        <begin position="1"/>
        <end position="660"/>
    </location>
</feature>
<feature type="domain" description="Helicase ATP-binding" evidence="2">
    <location>
        <begin position="200"/>
        <end position="375"/>
    </location>
</feature>
<feature type="domain" description="Helicase C-terminal" evidence="3">
    <location>
        <begin position="389"/>
        <end position="559"/>
    </location>
</feature>
<feature type="region of interest" description="Disordered" evidence="4">
    <location>
        <begin position="16"/>
        <end position="153"/>
    </location>
</feature>
<feature type="short sequence motif" description="Q motif">
    <location>
        <begin position="169"/>
        <end position="197"/>
    </location>
</feature>
<feature type="short sequence motif" description="DEAD box">
    <location>
        <begin position="323"/>
        <end position="326"/>
    </location>
</feature>
<feature type="compositionally biased region" description="Polar residues" evidence="4">
    <location>
        <begin position="25"/>
        <end position="40"/>
    </location>
</feature>
<feature type="compositionally biased region" description="Basic and acidic residues" evidence="4">
    <location>
        <begin position="124"/>
        <end position="133"/>
    </location>
</feature>
<feature type="compositionally biased region" description="Acidic residues" evidence="4">
    <location>
        <begin position="134"/>
        <end position="143"/>
    </location>
</feature>
<feature type="binding site" evidence="2">
    <location>
        <begin position="213"/>
        <end position="220"/>
    </location>
    <ligand>
        <name>ATP</name>
        <dbReference type="ChEBI" id="CHEBI:30616"/>
    </ligand>
</feature>
<feature type="sequence conflict" description="In Ref. 1; BAB31877." evidence="6" ref="1">
    <original>G</original>
    <variation>D</variation>
    <location>
        <position position="259"/>
    </location>
</feature>
<feature type="sequence conflict" description="In Ref. 1; BAC36015." evidence="6" ref="1">
    <original>Y</original>
    <variation>C</variation>
    <location>
        <position position="499"/>
    </location>
</feature>
<feature type="sequence conflict" description="In Ref. 1; BAC36015." evidence="6" ref="1">
    <original>K</original>
    <variation>R</variation>
    <location>
        <position position="637"/>
    </location>
</feature>
<accession>Q8K363</accession>
<accession>Q3MIB0</accession>
<accession>Q8BVZ2</accession>
<accession>Q9D2E0</accession>
<keyword id="KW-0067">ATP-binding</keyword>
<keyword id="KW-0158">Chromosome</keyword>
<keyword id="KW-0347">Helicase</keyword>
<keyword id="KW-0378">Hydrolase</keyword>
<keyword id="KW-0547">Nucleotide-binding</keyword>
<keyword id="KW-0539">Nucleus</keyword>
<keyword id="KW-1185">Reference proteome</keyword>
<keyword id="KW-0694">RNA-binding</keyword>
<dbReference type="EC" id="3.6.4.13"/>
<dbReference type="EMBL" id="AK075864">
    <property type="protein sequence ID" value="BAC36015.1"/>
    <property type="molecule type" value="mRNA"/>
</dbReference>
<dbReference type="EMBL" id="AK019845">
    <property type="protein sequence ID" value="BAB31877.1"/>
    <property type="molecule type" value="mRNA"/>
</dbReference>
<dbReference type="EMBL" id="BC028246">
    <property type="protein sequence ID" value="AAH28246.1"/>
    <property type="molecule type" value="mRNA"/>
</dbReference>
<dbReference type="EMBL" id="BC103776">
    <property type="protein sequence ID" value="AAI03777.1"/>
    <property type="molecule type" value="mRNA"/>
</dbReference>
<dbReference type="CCDS" id="CCDS15240.1"/>
<dbReference type="RefSeq" id="NP_080136.2">
    <property type="nucleotide sequence ID" value="NM_025860.3"/>
</dbReference>
<dbReference type="SMR" id="Q8K363"/>
<dbReference type="BioGRID" id="211826">
    <property type="interactions" value="12"/>
</dbReference>
<dbReference type="CORUM" id="Q8K363"/>
<dbReference type="FunCoup" id="Q8K363">
    <property type="interactions" value="3134"/>
</dbReference>
<dbReference type="STRING" id="10090.ENSMUSP00000001724"/>
<dbReference type="GlyGen" id="Q8K363">
    <property type="glycosylation" value="2 sites, 1 O-linked glycan (1 site)"/>
</dbReference>
<dbReference type="iPTMnet" id="Q8K363"/>
<dbReference type="PhosphoSitePlus" id="Q8K363"/>
<dbReference type="SwissPalm" id="Q8K363"/>
<dbReference type="PaxDb" id="10090-ENSMUSP00000001724"/>
<dbReference type="ProteomicsDB" id="279611"/>
<dbReference type="Pumba" id="Q8K363"/>
<dbReference type="Antibodypedia" id="33358">
    <property type="antibodies" value="87 antibodies from 23 providers"/>
</dbReference>
<dbReference type="DNASU" id="66942"/>
<dbReference type="Ensembl" id="ENSMUST00000001724.12">
    <property type="protein sequence ID" value="ENSMUSP00000001724.6"/>
    <property type="gene ID" value="ENSMUSG00000001674.12"/>
</dbReference>
<dbReference type="GeneID" id="66942"/>
<dbReference type="KEGG" id="mmu:66942"/>
<dbReference type="UCSC" id="uc007cjw.2">
    <property type="organism name" value="mouse"/>
</dbReference>
<dbReference type="AGR" id="MGI:1914192"/>
<dbReference type="CTD" id="8886"/>
<dbReference type="MGI" id="MGI:1914192">
    <property type="gene designation" value="Ddx18"/>
</dbReference>
<dbReference type="VEuPathDB" id="HostDB:ENSMUSG00000001674"/>
<dbReference type="eggNOG" id="KOG0342">
    <property type="taxonomic scope" value="Eukaryota"/>
</dbReference>
<dbReference type="GeneTree" id="ENSGT00680000100037"/>
<dbReference type="HOGENOM" id="CLU_003041_26_5_1"/>
<dbReference type="InParanoid" id="Q8K363"/>
<dbReference type="OMA" id="LMEFHSQ"/>
<dbReference type="OrthoDB" id="10259640at2759"/>
<dbReference type="PhylomeDB" id="Q8K363"/>
<dbReference type="TreeFam" id="TF300471"/>
<dbReference type="BioGRID-ORCS" id="66942">
    <property type="hits" value="26 hits in 80 CRISPR screens"/>
</dbReference>
<dbReference type="ChiTaRS" id="Ddx18">
    <property type="organism name" value="mouse"/>
</dbReference>
<dbReference type="PRO" id="PR:Q8K363"/>
<dbReference type="Proteomes" id="UP000000589">
    <property type="component" value="Chromosome 1"/>
</dbReference>
<dbReference type="RNAct" id="Q8K363">
    <property type="molecule type" value="protein"/>
</dbReference>
<dbReference type="Bgee" id="ENSMUSG00000001674">
    <property type="expression patterns" value="Expressed in embryonic post-anal tail and 81 other cell types or tissues"/>
</dbReference>
<dbReference type="ExpressionAtlas" id="Q8K363">
    <property type="expression patterns" value="baseline and differential"/>
</dbReference>
<dbReference type="GO" id="GO:0005694">
    <property type="term" value="C:chromosome"/>
    <property type="evidence" value="ECO:0000250"/>
    <property type="project" value="UniProtKB"/>
</dbReference>
<dbReference type="GO" id="GO:0005730">
    <property type="term" value="C:nucleolus"/>
    <property type="evidence" value="ECO:0000250"/>
    <property type="project" value="UniProtKB"/>
</dbReference>
<dbReference type="GO" id="GO:0005524">
    <property type="term" value="F:ATP binding"/>
    <property type="evidence" value="ECO:0007669"/>
    <property type="project" value="UniProtKB-KW"/>
</dbReference>
<dbReference type="GO" id="GO:0016887">
    <property type="term" value="F:ATP hydrolysis activity"/>
    <property type="evidence" value="ECO:0007669"/>
    <property type="project" value="RHEA"/>
</dbReference>
<dbReference type="GO" id="GO:0003723">
    <property type="term" value="F:RNA binding"/>
    <property type="evidence" value="ECO:0007669"/>
    <property type="project" value="UniProtKB-KW"/>
</dbReference>
<dbReference type="GO" id="GO:0003724">
    <property type="term" value="F:RNA helicase activity"/>
    <property type="evidence" value="ECO:0007669"/>
    <property type="project" value="UniProtKB-EC"/>
</dbReference>
<dbReference type="GO" id="GO:0071392">
    <property type="term" value="P:cellular response to estradiol stimulus"/>
    <property type="evidence" value="ECO:0007669"/>
    <property type="project" value="Ensembl"/>
</dbReference>
<dbReference type="CDD" id="cd17942">
    <property type="entry name" value="DEADc_DDX18"/>
    <property type="match status" value="1"/>
</dbReference>
<dbReference type="CDD" id="cd18787">
    <property type="entry name" value="SF2_C_DEAD"/>
    <property type="match status" value="1"/>
</dbReference>
<dbReference type="FunFam" id="3.40.50.300:FF:000379">
    <property type="entry name" value="RNA helicase"/>
    <property type="match status" value="1"/>
</dbReference>
<dbReference type="FunFam" id="3.40.50.300:FF:000460">
    <property type="entry name" value="RNA helicase"/>
    <property type="match status" value="1"/>
</dbReference>
<dbReference type="Gene3D" id="3.40.50.300">
    <property type="entry name" value="P-loop containing nucleotide triphosphate hydrolases"/>
    <property type="match status" value="2"/>
</dbReference>
<dbReference type="InterPro" id="IPR044773">
    <property type="entry name" value="DDX18/Has1_DEADc"/>
</dbReference>
<dbReference type="InterPro" id="IPR011545">
    <property type="entry name" value="DEAD/DEAH_box_helicase_dom"/>
</dbReference>
<dbReference type="InterPro" id="IPR014001">
    <property type="entry name" value="Helicase_ATP-bd"/>
</dbReference>
<dbReference type="InterPro" id="IPR001650">
    <property type="entry name" value="Helicase_C-like"/>
</dbReference>
<dbReference type="InterPro" id="IPR027417">
    <property type="entry name" value="P-loop_NTPase"/>
</dbReference>
<dbReference type="InterPro" id="IPR000629">
    <property type="entry name" value="RNA-helicase_DEAD-box_CS"/>
</dbReference>
<dbReference type="InterPro" id="IPR025313">
    <property type="entry name" value="SPB4-like_CTE"/>
</dbReference>
<dbReference type="PANTHER" id="PTHR24031">
    <property type="entry name" value="RNA HELICASE"/>
    <property type="match status" value="1"/>
</dbReference>
<dbReference type="Pfam" id="PF13959">
    <property type="entry name" value="CTE_SPB4"/>
    <property type="match status" value="1"/>
</dbReference>
<dbReference type="Pfam" id="PF00270">
    <property type="entry name" value="DEAD"/>
    <property type="match status" value="1"/>
</dbReference>
<dbReference type="Pfam" id="PF00271">
    <property type="entry name" value="Helicase_C"/>
    <property type="match status" value="1"/>
</dbReference>
<dbReference type="SMART" id="SM00487">
    <property type="entry name" value="DEXDc"/>
    <property type="match status" value="1"/>
</dbReference>
<dbReference type="SMART" id="SM01178">
    <property type="entry name" value="DUF4217"/>
    <property type="match status" value="1"/>
</dbReference>
<dbReference type="SMART" id="SM00490">
    <property type="entry name" value="HELICc"/>
    <property type="match status" value="1"/>
</dbReference>
<dbReference type="SUPFAM" id="SSF52540">
    <property type="entry name" value="P-loop containing nucleoside triphosphate hydrolases"/>
    <property type="match status" value="1"/>
</dbReference>
<dbReference type="PROSITE" id="PS00039">
    <property type="entry name" value="DEAD_ATP_HELICASE"/>
    <property type="match status" value="1"/>
</dbReference>
<dbReference type="PROSITE" id="PS51192">
    <property type="entry name" value="HELICASE_ATP_BIND_1"/>
    <property type="match status" value="1"/>
</dbReference>
<dbReference type="PROSITE" id="PS51194">
    <property type="entry name" value="HELICASE_CTER"/>
    <property type="match status" value="1"/>
</dbReference>
<dbReference type="PROSITE" id="PS51195">
    <property type="entry name" value="Q_MOTIF"/>
    <property type="match status" value="1"/>
</dbReference>
<gene>
    <name type="primary">Ddx18</name>
</gene>
<comment type="function">
    <text evidence="1 5">ATP-dependent RNA helicase that plays a role in the regulation of R-loop homeostasis in both endogenous R-loop-prone regions and at sites of DNA damage. At endogenous loci such as actively transcribed genes, may act as a helicase to resolve the formation of R-loop during transcription and prevent the interference of R-loop with DNA-replication machinery. Also participates in the removal of DNA-lesion-associated R-loop (By similarity). Plays an essential role for establishing pluripotency during embryogenesis and for pluripotency maintenance in embryonic stem cells (PubMed:31914400). Mechanistically, prevents the polycomb repressive complex 2 (PRC2) from accessing rDNA loci and protects the active chromatin status in nucleolus (PubMed:31914400).</text>
</comment>
<comment type="catalytic activity">
    <reaction>
        <text>ATP + H2O = ADP + phosphate + H(+)</text>
        <dbReference type="Rhea" id="RHEA:13065"/>
        <dbReference type="ChEBI" id="CHEBI:15377"/>
        <dbReference type="ChEBI" id="CHEBI:15378"/>
        <dbReference type="ChEBI" id="CHEBI:30616"/>
        <dbReference type="ChEBI" id="CHEBI:43474"/>
        <dbReference type="ChEBI" id="CHEBI:456216"/>
        <dbReference type="EC" id="3.6.4.13"/>
    </reaction>
</comment>
<comment type="subunit">
    <text evidence="1 5">Interacts with NOL8; the interaction is RNA-dependent. Interacts with PRC2 complex components EZH2, SUZ2 and JARID2; these interactions prevent deposition of the repressive H3K27me3 mark onto rDNA in pluripotent cells (PubMed:31914400).</text>
</comment>
<comment type="subcellular location">
    <subcellularLocation>
        <location evidence="5">Nucleus</location>
        <location evidence="5">Nucleolus</location>
    </subcellularLocation>
    <subcellularLocation>
        <location evidence="1">Chromosome</location>
    </subcellularLocation>
</comment>
<comment type="similarity">
    <text evidence="6">Belongs to the DEAD box helicase family. DDX18/HAS1 subfamily.</text>
</comment>
<name>DDX18_MOUSE</name>
<protein>
    <recommendedName>
        <fullName>ATP-dependent RNA helicase DDX18</fullName>
        <ecNumber>3.6.4.13</ecNumber>
    </recommendedName>
    <alternativeName>
        <fullName>DEAD box protein 18</fullName>
    </alternativeName>
</protein>
<proteinExistence type="evidence at protein level"/>
<reference key="1">
    <citation type="journal article" date="2005" name="Science">
        <title>The transcriptional landscape of the mammalian genome.</title>
        <authorList>
            <person name="Carninci P."/>
            <person name="Kasukawa T."/>
            <person name="Katayama S."/>
            <person name="Gough J."/>
            <person name="Frith M.C."/>
            <person name="Maeda N."/>
            <person name="Oyama R."/>
            <person name="Ravasi T."/>
            <person name="Lenhard B."/>
            <person name="Wells C."/>
            <person name="Kodzius R."/>
            <person name="Shimokawa K."/>
            <person name="Bajic V.B."/>
            <person name="Brenner S.E."/>
            <person name="Batalov S."/>
            <person name="Forrest A.R."/>
            <person name="Zavolan M."/>
            <person name="Davis M.J."/>
            <person name="Wilming L.G."/>
            <person name="Aidinis V."/>
            <person name="Allen J.E."/>
            <person name="Ambesi-Impiombato A."/>
            <person name="Apweiler R."/>
            <person name="Aturaliya R.N."/>
            <person name="Bailey T.L."/>
            <person name="Bansal M."/>
            <person name="Baxter L."/>
            <person name="Beisel K.W."/>
            <person name="Bersano T."/>
            <person name="Bono H."/>
            <person name="Chalk A.M."/>
            <person name="Chiu K.P."/>
            <person name="Choudhary V."/>
            <person name="Christoffels A."/>
            <person name="Clutterbuck D.R."/>
            <person name="Crowe M.L."/>
            <person name="Dalla E."/>
            <person name="Dalrymple B.P."/>
            <person name="de Bono B."/>
            <person name="Della Gatta G."/>
            <person name="di Bernardo D."/>
            <person name="Down T."/>
            <person name="Engstrom P."/>
            <person name="Fagiolini M."/>
            <person name="Faulkner G."/>
            <person name="Fletcher C.F."/>
            <person name="Fukushima T."/>
            <person name="Furuno M."/>
            <person name="Futaki S."/>
            <person name="Gariboldi M."/>
            <person name="Georgii-Hemming P."/>
            <person name="Gingeras T.R."/>
            <person name="Gojobori T."/>
            <person name="Green R.E."/>
            <person name="Gustincich S."/>
            <person name="Harbers M."/>
            <person name="Hayashi Y."/>
            <person name="Hensch T.K."/>
            <person name="Hirokawa N."/>
            <person name="Hill D."/>
            <person name="Huminiecki L."/>
            <person name="Iacono M."/>
            <person name="Ikeo K."/>
            <person name="Iwama A."/>
            <person name="Ishikawa T."/>
            <person name="Jakt M."/>
            <person name="Kanapin A."/>
            <person name="Katoh M."/>
            <person name="Kawasawa Y."/>
            <person name="Kelso J."/>
            <person name="Kitamura H."/>
            <person name="Kitano H."/>
            <person name="Kollias G."/>
            <person name="Krishnan S.P."/>
            <person name="Kruger A."/>
            <person name="Kummerfeld S.K."/>
            <person name="Kurochkin I.V."/>
            <person name="Lareau L.F."/>
            <person name="Lazarevic D."/>
            <person name="Lipovich L."/>
            <person name="Liu J."/>
            <person name="Liuni S."/>
            <person name="McWilliam S."/>
            <person name="Madan Babu M."/>
            <person name="Madera M."/>
            <person name="Marchionni L."/>
            <person name="Matsuda H."/>
            <person name="Matsuzawa S."/>
            <person name="Miki H."/>
            <person name="Mignone F."/>
            <person name="Miyake S."/>
            <person name="Morris K."/>
            <person name="Mottagui-Tabar S."/>
            <person name="Mulder N."/>
            <person name="Nakano N."/>
            <person name="Nakauchi H."/>
            <person name="Ng P."/>
            <person name="Nilsson R."/>
            <person name="Nishiguchi S."/>
            <person name="Nishikawa S."/>
            <person name="Nori F."/>
            <person name="Ohara O."/>
            <person name="Okazaki Y."/>
            <person name="Orlando V."/>
            <person name="Pang K.C."/>
            <person name="Pavan W.J."/>
            <person name="Pavesi G."/>
            <person name="Pesole G."/>
            <person name="Petrovsky N."/>
            <person name="Piazza S."/>
            <person name="Reed J."/>
            <person name="Reid J.F."/>
            <person name="Ring B.Z."/>
            <person name="Ringwald M."/>
            <person name="Rost B."/>
            <person name="Ruan Y."/>
            <person name="Salzberg S.L."/>
            <person name="Sandelin A."/>
            <person name="Schneider C."/>
            <person name="Schoenbach C."/>
            <person name="Sekiguchi K."/>
            <person name="Semple C.A."/>
            <person name="Seno S."/>
            <person name="Sessa L."/>
            <person name="Sheng Y."/>
            <person name="Shibata Y."/>
            <person name="Shimada H."/>
            <person name="Shimada K."/>
            <person name="Silva D."/>
            <person name="Sinclair B."/>
            <person name="Sperling S."/>
            <person name="Stupka E."/>
            <person name="Sugiura K."/>
            <person name="Sultana R."/>
            <person name="Takenaka Y."/>
            <person name="Taki K."/>
            <person name="Tammoja K."/>
            <person name="Tan S.L."/>
            <person name="Tang S."/>
            <person name="Taylor M.S."/>
            <person name="Tegner J."/>
            <person name="Teichmann S.A."/>
            <person name="Ueda H.R."/>
            <person name="van Nimwegen E."/>
            <person name="Verardo R."/>
            <person name="Wei C.L."/>
            <person name="Yagi K."/>
            <person name="Yamanishi H."/>
            <person name="Zabarovsky E."/>
            <person name="Zhu S."/>
            <person name="Zimmer A."/>
            <person name="Hide W."/>
            <person name="Bult C."/>
            <person name="Grimmond S.M."/>
            <person name="Teasdale R.D."/>
            <person name="Liu E.T."/>
            <person name="Brusic V."/>
            <person name="Quackenbush J."/>
            <person name="Wahlestedt C."/>
            <person name="Mattick J.S."/>
            <person name="Hume D.A."/>
            <person name="Kai C."/>
            <person name="Sasaki D."/>
            <person name="Tomaru Y."/>
            <person name="Fukuda S."/>
            <person name="Kanamori-Katayama M."/>
            <person name="Suzuki M."/>
            <person name="Aoki J."/>
            <person name="Arakawa T."/>
            <person name="Iida J."/>
            <person name="Imamura K."/>
            <person name="Itoh M."/>
            <person name="Kato T."/>
            <person name="Kawaji H."/>
            <person name="Kawagashira N."/>
            <person name="Kawashima T."/>
            <person name="Kojima M."/>
            <person name="Kondo S."/>
            <person name="Konno H."/>
            <person name="Nakano K."/>
            <person name="Ninomiya N."/>
            <person name="Nishio T."/>
            <person name="Okada M."/>
            <person name="Plessy C."/>
            <person name="Shibata K."/>
            <person name="Shiraki T."/>
            <person name="Suzuki S."/>
            <person name="Tagami M."/>
            <person name="Waki K."/>
            <person name="Watahiki A."/>
            <person name="Okamura-Oho Y."/>
            <person name="Suzuki H."/>
            <person name="Kawai J."/>
            <person name="Hayashizaki Y."/>
        </authorList>
    </citation>
    <scope>NUCLEOTIDE SEQUENCE [LARGE SCALE MRNA]</scope>
    <source>
        <strain>C57BL/6J</strain>
        <tissue>Testis</tissue>
        <tissue>Tongue</tissue>
    </source>
</reference>
<reference key="2">
    <citation type="journal article" date="2004" name="Genome Res.">
        <title>The status, quality, and expansion of the NIH full-length cDNA project: the Mammalian Gene Collection (MGC).</title>
        <authorList>
            <consortium name="The MGC Project Team"/>
        </authorList>
    </citation>
    <scope>NUCLEOTIDE SEQUENCE [LARGE SCALE MRNA]</scope>
    <source>
        <strain>FVB/N</strain>
        <tissue>Eye</tissue>
        <tissue>Mammary tumor</tissue>
    </source>
</reference>
<reference key="3">
    <citation type="journal article" date="2010" name="Cell">
        <title>A tissue-specific atlas of mouse protein phosphorylation and expression.</title>
        <authorList>
            <person name="Huttlin E.L."/>
            <person name="Jedrychowski M.P."/>
            <person name="Elias J.E."/>
            <person name="Goswami T."/>
            <person name="Rad R."/>
            <person name="Beausoleil S.A."/>
            <person name="Villen J."/>
            <person name="Haas W."/>
            <person name="Sowa M.E."/>
            <person name="Gygi S.P."/>
        </authorList>
    </citation>
    <scope>IDENTIFICATION BY MASS SPECTROMETRY [LARGE SCALE ANALYSIS]</scope>
    <source>
        <tissue>Spleen</tissue>
    </source>
</reference>
<reference key="4">
    <citation type="journal article" date="2020" name="Cell Rep.">
        <title>DEAD-Box Helicase 18 Counteracts PRC2 to Safeguard Ribosomal DNA in Pluripotency Regulation.</title>
        <authorList>
            <person name="Zhang H."/>
            <person name="Wu Z."/>
            <person name="Lu J.Y."/>
            <person name="Huang B."/>
            <person name="Zhou H."/>
            <person name="Xie W."/>
            <person name="Wang J."/>
            <person name="Shen X."/>
        </authorList>
    </citation>
    <scope>FUNCTION</scope>
    <scope>INTERACTION WITH EZH2; SUZ12 AND JARID2</scope>
    <scope>SUBCELLULAR LOCATION</scope>
</reference>